<evidence type="ECO:0000255" key="1">
    <source>
        <dbReference type="HAMAP-Rule" id="MF_01210"/>
    </source>
</evidence>
<gene>
    <name evidence="1" type="primary">carB</name>
    <name type="ordered locus">Cbei_0029</name>
</gene>
<keyword id="KW-0028">Amino-acid biosynthesis</keyword>
<keyword id="KW-0055">Arginine biosynthesis</keyword>
<keyword id="KW-0067">ATP-binding</keyword>
<keyword id="KW-0436">Ligase</keyword>
<keyword id="KW-0460">Magnesium</keyword>
<keyword id="KW-0464">Manganese</keyword>
<keyword id="KW-0479">Metal-binding</keyword>
<keyword id="KW-0547">Nucleotide-binding</keyword>
<keyword id="KW-0665">Pyrimidine biosynthesis</keyword>
<keyword id="KW-0677">Repeat</keyword>
<reference key="1">
    <citation type="submission" date="2007-06" db="EMBL/GenBank/DDBJ databases">
        <title>Complete sequence of Clostridium beijerinckii NCIMB 8052.</title>
        <authorList>
            <consortium name="US DOE Joint Genome Institute"/>
            <person name="Copeland A."/>
            <person name="Lucas S."/>
            <person name="Lapidus A."/>
            <person name="Barry K."/>
            <person name="Detter J.C."/>
            <person name="Glavina del Rio T."/>
            <person name="Hammon N."/>
            <person name="Israni S."/>
            <person name="Dalin E."/>
            <person name="Tice H."/>
            <person name="Pitluck S."/>
            <person name="Sims D."/>
            <person name="Brettin T."/>
            <person name="Bruce D."/>
            <person name="Tapia R."/>
            <person name="Brainard J."/>
            <person name="Schmutz J."/>
            <person name="Larimer F."/>
            <person name="Land M."/>
            <person name="Hauser L."/>
            <person name="Kyrpides N."/>
            <person name="Mikhailova N."/>
            <person name="Bennet G."/>
            <person name="Cann I."/>
            <person name="Chen J.-S."/>
            <person name="Contreras A.L."/>
            <person name="Jones D."/>
            <person name="Kashket E."/>
            <person name="Mitchell W."/>
            <person name="Stoddard S."/>
            <person name="Schwarz W."/>
            <person name="Qureshi N."/>
            <person name="Young M."/>
            <person name="Shi Z."/>
            <person name="Ezeji T."/>
            <person name="White B."/>
            <person name="Blaschek H."/>
            <person name="Richardson P."/>
        </authorList>
    </citation>
    <scope>NUCLEOTIDE SEQUENCE [LARGE SCALE GENOMIC DNA]</scope>
    <source>
        <strain>ATCC 51743 / NCIMB 8052</strain>
    </source>
</reference>
<accession>A6LPD9</accession>
<comment type="function">
    <text evidence="1">Large subunit of the glutamine-dependent carbamoyl phosphate synthetase (CPSase). CPSase catalyzes the formation of carbamoyl phosphate from the ammonia moiety of glutamine, carbonate, and phosphate donated by ATP, constituting the first step of 2 biosynthetic pathways, one leading to arginine and/or urea and the other to pyrimidine nucleotides. The large subunit (synthetase) binds the substrates ammonia (free or transferred from glutamine from the small subunit), hydrogencarbonate and ATP and carries out an ATP-coupled ligase reaction, activating hydrogencarbonate by forming carboxy phosphate which reacts with ammonia to form carbamoyl phosphate.</text>
</comment>
<comment type="catalytic activity">
    <reaction evidence="1">
        <text>hydrogencarbonate + L-glutamine + 2 ATP + H2O = carbamoyl phosphate + L-glutamate + 2 ADP + phosphate + 2 H(+)</text>
        <dbReference type="Rhea" id="RHEA:18633"/>
        <dbReference type="ChEBI" id="CHEBI:15377"/>
        <dbReference type="ChEBI" id="CHEBI:15378"/>
        <dbReference type="ChEBI" id="CHEBI:17544"/>
        <dbReference type="ChEBI" id="CHEBI:29985"/>
        <dbReference type="ChEBI" id="CHEBI:30616"/>
        <dbReference type="ChEBI" id="CHEBI:43474"/>
        <dbReference type="ChEBI" id="CHEBI:58228"/>
        <dbReference type="ChEBI" id="CHEBI:58359"/>
        <dbReference type="ChEBI" id="CHEBI:456216"/>
        <dbReference type="EC" id="6.3.5.5"/>
    </reaction>
</comment>
<comment type="catalytic activity">
    <molecule>Carbamoyl phosphate synthase large chain</molecule>
    <reaction evidence="1">
        <text>hydrogencarbonate + NH4(+) + 2 ATP = carbamoyl phosphate + 2 ADP + phosphate + 2 H(+)</text>
        <dbReference type="Rhea" id="RHEA:18029"/>
        <dbReference type="ChEBI" id="CHEBI:15378"/>
        <dbReference type="ChEBI" id="CHEBI:17544"/>
        <dbReference type="ChEBI" id="CHEBI:28938"/>
        <dbReference type="ChEBI" id="CHEBI:30616"/>
        <dbReference type="ChEBI" id="CHEBI:43474"/>
        <dbReference type="ChEBI" id="CHEBI:58228"/>
        <dbReference type="ChEBI" id="CHEBI:456216"/>
        <dbReference type="EC" id="6.3.4.16"/>
    </reaction>
</comment>
<comment type="cofactor">
    <cofactor evidence="1">
        <name>Mg(2+)</name>
        <dbReference type="ChEBI" id="CHEBI:18420"/>
    </cofactor>
    <cofactor evidence="1">
        <name>Mn(2+)</name>
        <dbReference type="ChEBI" id="CHEBI:29035"/>
    </cofactor>
    <text evidence="1">Binds 4 Mg(2+) or Mn(2+) ions per subunit.</text>
</comment>
<comment type="pathway">
    <text evidence="1">Amino-acid biosynthesis; L-arginine biosynthesis; carbamoyl phosphate from bicarbonate: step 1/1.</text>
</comment>
<comment type="pathway">
    <text evidence="1">Pyrimidine metabolism; UMP biosynthesis via de novo pathway; (S)-dihydroorotate from bicarbonate: step 1/3.</text>
</comment>
<comment type="subunit">
    <text evidence="1">Composed of two chains; the small (or glutamine) chain promotes the hydrolysis of glutamine to ammonia, which is used by the large (or ammonia) chain to synthesize carbamoyl phosphate. Tetramer of heterodimers (alpha,beta)4.</text>
</comment>
<comment type="domain">
    <text evidence="1">The large subunit is composed of 2 ATP-grasp domains that are involved in binding the 2 ATP molecules needed for carbamoyl phosphate synthesis. The N-terminal ATP-grasp domain (referred to as the carboxyphosphate synthetic component) catalyzes the ATP-dependent phosphorylation of hydrogencarbonate to carboxyphosphate and the subsequent nucleophilic attack by ammonia to form a carbamate intermediate. The C-terminal ATP-grasp domain (referred to as the carbamoyl phosphate synthetic component) then catalyzes the phosphorylation of carbamate with the second ATP to form the end product carbamoyl phosphate. The reactive and unstable enzyme intermediates are sequentially channeled from one active site to the next through the interior of the protein over a distance of at least 96 A.</text>
</comment>
<comment type="similarity">
    <text evidence="1">Belongs to the CarB family.</text>
</comment>
<name>CARB_CLOB8</name>
<sequence>MPLNKDIKKVLVIGSGPIVIGQAAEFDYSGTQACEALKSEGIEVVLVNSNPATIMTDKEVADKVYLEPLTLEFVEKVIAKERPDSLLAGMGGQTGLNLAVELHDSGILEKYNVKVIGTSIASIKEGEDRELFRDMMNRIGEPVIKSEIVTDLTAGLEFANKIGYPVIVRPAYTLGGSGGGIADDEEQLRTILESGLQLSTIGQVLLEKSVKGWKEVEYEVMRDSYGNCITVCNMENIDPVGIHTGDSIVVAPSQTLSDKEYQMLRTASINIINAVGIEGGCNVQFSLNPNSFEYAVIEINPRVSRSSALASKATGYPIAKLAAKIALGYGLDEIKNAVTQKTYACFEPTLDYVVVKIPKWPFDKFFGADRELGTKMMATGEIMAIGANFEQAFLKGIRSLEIGKYSLDHNKFKEYSISKLKSIVMKPDDERIFALAEMIRRDYMIDRINKITGIDMFFLEKIKWIVEEEQRLKLSKIEDLDKEWLHHLKKKGFSDKAIADMLKVSPDDVYRLRDIWSIKPSYKMVDTCGGEFEALSPYYYSTYEQYDEVEVSNNKKVIVIGSGPIRIGQGIEFDYASVHCVKALKKLGIETIIVNNNPETVSTDFDVSDKLYFEPLTEEDVLNIIEKEKPDGVILQFGGQTAIKLANFLKEQNIVTLGTTADQIDMAEDREKFDELLERLGISRPKGKGIWSLEEGLEEAKRLKFPVLVRPSYVIGGQGMEITHDEEELTYYLENAFAKDSKNPILIDKYLMGREIEVDAISDGENILIPGIMEHLERAGVHSGDSVTMYPSQNISDKIKADVLEYTKKLALAIGIKGMINIQFIEFEGELYVIEVNPRASRTVPYISKVSGVPIVDLATQVMLGAKLKELGYGIDVYKEPELVSVKVPVFSTQKLPNVEVSLGPEMRSTGEVLGVGRNIKEALYKGFVGAYMYPSKEKGKILATINKHDKAEFLPIAKDLASVGYKFIATSGTCALLKEAGIEVEEIRKIDEEEPNILDIVKNREVDLVVNTPTKGNDSKRDGFLIRRAAVERNLGVITALDTLRAIADVELEKFDENKDLEVFNIAK</sequence>
<protein>
    <recommendedName>
        <fullName evidence="1">Carbamoyl phosphate synthase large chain</fullName>
        <ecNumber evidence="1">6.3.4.16</ecNumber>
        <ecNumber evidence="1">6.3.5.5</ecNumber>
    </recommendedName>
    <alternativeName>
        <fullName evidence="1">Carbamoyl phosphate synthetase ammonia chain</fullName>
    </alternativeName>
</protein>
<feature type="chain" id="PRO_1000085556" description="Carbamoyl phosphate synthase large chain">
    <location>
        <begin position="1"/>
        <end position="1069"/>
    </location>
</feature>
<feature type="domain" description="ATP-grasp 1" evidence="1">
    <location>
        <begin position="133"/>
        <end position="327"/>
    </location>
</feature>
<feature type="domain" description="ATP-grasp 2" evidence="1">
    <location>
        <begin position="674"/>
        <end position="864"/>
    </location>
</feature>
<feature type="domain" description="MGS-like" evidence="1">
    <location>
        <begin position="932"/>
        <end position="1069"/>
    </location>
</feature>
<feature type="region of interest" description="Carboxyphosphate synthetic domain" evidence="1">
    <location>
        <begin position="1"/>
        <end position="401"/>
    </location>
</feature>
<feature type="region of interest" description="Oligomerization domain" evidence="1">
    <location>
        <begin position="402"/>
        <end position="549"/>
    </location>
</feature>
<feature type="region of interest" description="Carbamoyl phosphate synthetic domain" evidence="1">
    <location>
        <begin position="550"/>
        <end position="932"/>
    </location>
</feature>
<feature type="region of interest" description="Allosteric domain" evidence="1">
    <location>
        <begin position="933"/>
        <end position="1069"/>
    </location>
</feature>
<feature type="binding site" evidence="1">
    <location>
        <position position="129"/>
    </location>
    <ligand>
        <name>ATP</name>
        <dbReference type="ChEBI" id="CHEBI:30616"/>
        <label>1</label>
    </ligand>
</feature>
<feature type="binding site" evidence="1">
    <location>
        <position position="169"/>
    </location>
    <ligand>
        <name>ATP</name>
        <dbReference type="ChEBI" id="CHEBI:30616"/>
        <label>1</label>
    </ligand>
</feature>
<feature type="binding site" evidence="1">
    <location>
        <position position="175"/>
    </location>
    <ligand>
        <name>ATP</name>
        <dbReference type="ChEBI" id="CHEBI:30616"/>
        <label>1</label>
    </ligand>
</feature>
<feature type="binding site" evidence="1">
    <location>
        <position position="176"/>
    </location>
    <ligand>
        <name>ATP</name>
        <dbReference type="ChEBI" id="CHEBI:30616"/>
        <label>1</label>
    </ligand>
</feature>
<feature type="binding site" evidence="1">
    <location>
        <position position="208"/>
    </location>
    <ligand>
        <name>ATP</name>
        <dbReference type="ChEBI" id="CHEBI:30616"/>
        <label>1</label>
    </ligand>
</feature>
<feature type="binding site" evidence="1">
    <location>
        <position position="210"/>
    </location>
    <ligand>
        <name>ATP</name>
        <dbReference type="ChEBI" id="CHEBI:30616"/>
        <label>1</label>
    </ligand>
</feature>
<feature type="binding site" evidence="1">
    <location>
        <position position="215"/>
    </location>
    <ligand>
        <name>ATP</name>
        <dbReference type="ChEBI" id="CHEBI:30616"/>
        <label>1</label>
    </ligand>
</feature>
<feature type="binding site" evidence="1">
    <location>
        <position position="241"/>
    </location>
    <ligand>
        <name>ATP</name>
        <dbReference type="ChEBI" id="CHEBI:30616"/>
        <label>1</label>
    </ligand>
</feature>
<feature type="binding site" evidence="1">
    <location>
        <position position="242"/>
    </location>
    <ligand>
        <name>ATP</name>
        <dbReference type="ChEBI" id="CHEBI:30616"/>
        <label>1</label>
    </ligand>
</feature>
<feature type="binding site" evidence="1">
    <location>
        <position position="243"/>
    </location>
    <ligand>
        <name>ATP</name>
        <dbReference type="ChEBI" id="CHEBI:30616"/>
        <label>1</label>
    </ligand>
</feature>
<feature type="binding site" evidence="1">
    <location>
        <position position="284"/>
    </location>
    <ligand>
        <name>ATP</name>
        <dbReference type="ChEBI" id="CHEBI:30616"/>
        <label>1</label>
    </ligand>
</feature>
<feature type="binding site" evidence="1">
    <location>
        <position position="284"/>
    </location>
    <ligand>
        <name>Mg(2+)</name>
        <dbReference type="ChEBI" id="CHEBI:18420"/>
        <label>1</label>
    </ligand>
</feature>
<feature type="binding site" evidence="1">
    <location>
        <position position="284"/>
    </location>
    <ligand>
        <name>Mn(2+)</name>
        <dbReference type="ChEBI" id="CHEBI:29035"/>
        <label>1</label>
    </ligand>
</feature>
<feature type="binding site" evidence="1">
    <location>
        <position position="298"/>
    </location>
    <ligand>
        <name>ATP</name>
        <dbReference type="ChEBI" id="CHEBI:30616"/>
        <label>1</label>
    </ligand>
</feature>
<feature type="binding site" evidence="1">
    <location>
        <position position="298"/>
    </location>
    <ligand>
        <name>Mg(2+)</name>
        <dbReference type="ChEBI" id="CHEBI:18420"/>
        <label>1</label>
    </ligand>
</feature>
<feature type="binding site" evidence="1">
    <location>
        <position position="298"/>
    </location>
    <ligand>
        <name>Mg(2+)</name>
        <dbReference type="ChEBI" id="CHEBI:18420"/>
        <label>2</label>
    </ligand>
</feature>
<feature type="binding site" evidence="1">
    <location>
        <position position="298"/>
    </location>
    <ligand>
        <name>Mn(2+)</name>
        <dbReference type="ChEBI" id="CHEBI:29035"/>
        <label>1</label>
    </ligand>
</feature>
<feature type="binding site" evidence="1">
    <location>
        <position position="298"/>
    </location>
    <ligand>
        <name>Mn(2+)</name>
        <dbReference type="ChEBI" id="CHEBI:29035"/>
        <label>2</label>
    </ligand>
</feature>
<feature type="binding site" evidence="1">
    <location>
        <position position="300"/>
    </location>
    <ligand>
        <name>Mg(2+)</name>
        <dbReference type="ChEBI" id="CHEBI:18420"/>
        <label>2</label>
    </ligand>
</feature>
<feature type="binding site" evidence="1">
    <location>
        <position position="300"/>
    </location>
    <ligand>
        <name>Mn(2+)</name>
        <dbReference type="ChEBI" id="CHEBI:29035"/>
        <label>2</label>
    </ligand>
</feature>
<feature type="binding site" evidence="1">
    <location>
        <position position="710"/>
    </location>
    <ligand>
        <name>ATP</name>
        <dbReference type="ChEBI" id="CHEBI:30616"/>
        <label>2</label>
    </ligand>
</feature>
<feature type="binding site" evidence="1">
    <location>
        <position position="749"/>
    </location>
    <ligand>
        <name>ATP</name>
        <dbReference type="ChEBI" id="CHEBI:30616"/>
        <label>2</label>
    </ligand>
</feature>
<feature type="binding site" evidence="1">
    <location>
        <position position="751"/>
    </location>
    <ligand>
        <name>ATP</name>
        <dbReference type="ChEBI" id="CHEBI:30616"/>
        <label>2</label>
    </ligand>
</feature>
<feature type="binding site" evidence="1">
    <location>
        <position position="755"/>
    </location>
    <ligand>
        <name>ATP</name>
        <dbReference type="ChEBI" id="CHEBI:30616"/>
        <label>2</label>
    </ligand>
</feature>
<feature type="binding site" evidence="1">
    <location>
        <position position="780"/>
    </location>
    <ligand>
        <name>ATP</name>
        <dbReference type="ChEBI" id="CHEBI:30616"/>
        <label>2</label>
    </ligand>
</feature>
<feature type="binding site" evidence="1">
    <location>
        <position position="781"/>
    </location>
    <ligand>
        <name>ATP</name>
        <dbReference type="ChEBI" id="CHEBI:30616"/>
        <label>2</label>
    </ligand>
</feature>
<feature type="binding site" evidence="1">
    <location>
        <position position="782"/>
    </location>
    <ligand>
        <name>ATP</name>
        <dbReference type="ChEBI" id="CHEBI:30616"/>
        <label>2</label>
    </ligand>
</feature>
<feature type="binding site" evidence="1">
    <location>
        <position position="783"/>
    </location>
    <ligand>
        <name>ATP</name>
        <dbReference type="ChEBI" id="CHEBI:30616"/>
        <label>2</label>
    </ligand>
</feature>
<feature type="binding site" evidence="1">
    <location>
        <position position="823"/>
    </location>
    <ligand>
        <name>ATP</name>
        <dbReference type="ChEBI" id="CHEBI:30616"/>
        <label>2</label>
    </ligand>
</feature>
<feature type="binding site" evidence="1">
    <location>
        <position position="823"/>
    </location>
    <ligand>
        <name>Mg(2+)</name>
        <dbReference type="ChEBI" id="CHEBI:18420"/>
        <label>3</label>
    </ligand>
</feature>
<feature type="binding site" evidence="1">
    <location>
        <position position="823"/>
    </location>
    <ligand>
        <name>Mn(2+)</name>
        <dbReference type="ChEBI" id="CHEBI:29035"/>
        <label>3</label>
    </ligand>
</feature>
<feature type="binding site" evidence="1">
    <location>
        <position position="835"/>
    </location>
    <ligand>
        <name>ATP</name>
        <dbReference type="ChEBI" id="CHEBI:30616"/>
        <label>2</label>
    </ligand>
</feature>
<feature type="binding site" evidence="1">
    <location>
        <position position="835"/>
    </location>
    <ligand>
        <name>Mg(2+)</name>
        <dbReference type="ChEBI" id="CHEBI:18420"/>
        <label>3</label>
    </ligand>
</feature>
<feature type="binding site" evidence="1">
    <location>
        <position position="835"/>
    </location>
    <ligand>
        <name>Mg(2+)</name>
        <dbReference type="ChEBI" id="CHEBI:18420"/>
        <label>4</label>
    </ligand>
</feature>
<feature type="binding site" evidence="1">
    <location>
        <position position="835"/>
    </location>
    <ligand>
        <name>Mn(2+)</name>
        <dbReference type="ChEBI" id="CHEBI:29035"/>
        <label>3</label>
    </ligand>
</feature>
<feature type="binding site" evidence="1">
    <location>
        <position position="835"/>
    </location>
    <ligand>
        <name>Mn(2+)</name>
        <dbReference type="ChEBI" id="CHEBI:29035"/>
        <label>4</label>
    </ligand>
</feature>
<feature type="binding site" evidence="1">
    <location>
        <position position="837"/>
    </location>
    <ligand>
        <name>Mg(2+)</name>
        <dbReference type="ChEBI" id="CHEBI:18420"/>
        <label>4</label>
    </ligand>
</feature>
<feature type="binding site" evidence="1">
    <location>
        <position position="837"/>
    </location>
    <ligand>
        <name>Mn(2+)</name>
        <dbReference type="ChEBI" id="CHEBI:29035"/>
        <label>4</label>
    </ligand>
</feature>
<dbReference type="EC" id="6.3.4.16" evidence="1"/>
<dbReference type="EC" id="6.3.5.5" evidence="1"/>
<dbReference type="EMBL" id="CP000721">
    <property type="protein sequence ID" value="ABR32219.1"/>
    <property type="molecule type" value="Genomic_DNA"/>
</dbReference>
<dbReference type="RefSeq" id="WP_011967394.1">
    <property type="nucleotide sequence ID" value="NC_009617.1"/>
</dbReference>
<dbReference type="SMR" id="A6LPD9"/>
<dbReference type="GeneID" id="66342897"/>
<dbReference type="KEGG" id="cbe:Cbei_0029"/>
<dbReference type="eggNOG" id="COG0458">
    <property type="taxonomic scope" value="Bacteria"/>
</dbReference>
<dbReference type="HOGENOM" id="CLU_000513_1_0_9"/>
<dbReference type="UniPathway" id="UPA00068">
    <property type="reaction ID" value="UER00171"/>
</dbReference>
<dbReference type="UniPathway" id="UPA00070">
    <property type="reaction ID" value="UER00115"/>
</dbReference>
<dbReference type="Proteomes" id="UP000000565">
    <property type="component" value="Chromosome"/>
</dbReference>
<dbReference type="GO" id="GO:0005737">
    <property type="term" value="C:cytoplasm"/>
    <property type="evidence" value="ECO:0007669"/>
    <property type="project" value="TreeGrafter"/>
</dbReference>
<dbReference type="GO" id="GO:0005524">
    <property type="term" value="F:ATP binding"/>
    <property type="evidence" value="ECO:0007669"/>
    <property type="project" value="UniProtKB-UniRule"/>
</dbReference>
<dbReference type="GO" id="GO:0004087">
    <property type="term" value="F:carbamoyl-phosphate synthase (ammonia) activity"/>
    <property type="evidence" value="ECO:0007669"/>
    <property type="project" value="RHEA"/>
</dbReference>
<dbReference type="GO" id="GO:0004088">
    <property type="term" value="F:carbamoyl-phosphate synthase (glutamine-hydrolyzing) activity"/>
    <property type="evidence" value="ECO:0007669"/>
    <property type="project" value="UniProtKB-UniRule"/>
</dbReference>
<dbReference type="GO" id="GO:0046872">
    <property type="term" value="F:metal ion binding"/>
    <property type="evidence" value="ECO:0007669"/>
    <property type="project" value="UniProtKB-KW"/>
</dbReference>
<dbReference type="GO" id="GO:0044205">
    <property type="term" value="P:'de novo' UMP biosynthetic process"/>
    <property type="evidence" value="ECO:0007669"/>
    <property type="project" value="UniProtKB-UniRule"/>
</dbReference>
<dbReference type="GO" id="GO:0006541">
    <property type="term" value="P:glutamine metabolic process"/>
    <property type="evidence" value="ECO:0007669"/>
    <property type="project" value="TreeGrafter"/>
</dbReference>
<dbReference type="GO" id="GO:0006526">
    <property type="term" value="P:L-arginine biosynthetic process"/>
    <property type="evidence" value="ECO:0007669"/>
    <property type="project" value="UniProtKB-UniRule"/>
</dbReference>
<dbReference type="CDD" id="cd01424">
    <property type="entry name" value="MGS_CPS_II"/>
    <property type="match status" value="1"/>
</dbReference>
<dbReference type="FunFam" id="1.10.1030.10:FF:000002">
    <property type="entry name" value="Carbamoyl-phosphate synthase large chain"/>
    <property type="match status" value="1"/>
</dbReference>
<dbReference type="FunFam" id="3.30.470.20:FF:000001">
    <property type="entry name" value="Carbamoyl-phosphate synthase large chain"/>
    <property type="match status" value="1"/>
</dbReference>
<dbReference type="FunFam" id="3.30.470.20:FF:000026">
    <property type="entry name" value="Carbamoyl-phosphate synthase large chain"/>
    <property type="match status" value="1"/>
</dbReference>
<dbReference type="FunFam" id="3.40.50.20:FF:000001">
    <property type="entry name" value="Carbamoyl-phosphate synthase large chain"/>
    <property type="match status" value="1"/>
</dbReference>
<dbReference type="FunFam" id="3.40.50.20:FF:000002">
    <property type="entry name" value="Carbamoyl-phosphate synthase large chain"/>
    <property type="match status" value="1"/>
</dbReference>
<dbReference type="Gene3D" id="3.40.50.20">
    <property type="match status" value="2"/>
</dbReference>
<dbReference type="Gene3D" id="3.30.1490.20">
    <property type="entry name" value="ATP-grasp fold, A domain"/>
    <property type="match status" value="1"/>
</dbReference>
<dbReference type="Gene3D" id="3.30.470.20">
    <property type="entry name" value="ATP-grasp fold, B domain"/>
    <property type="match status" value="2"/>
</dbReference>
<dbReference type="Gene3D" id="1.10.1030.10">
    <property type="entry name" value="Carbamoyl-phosphate synthetase, large subunit oligomerisation domain"/>
    <property type="match status" value="1"/>
</dbReference>
<dbReference type="Gene3D" id="3.40.50.1380">
    <property type="entry name" value="Methylglyoxal synthase-like domain"/>
    <property type="match status" value="1"/>
</dbReference>
<dbReference type="HAMAP" id="MF_01210_A">
    <property type="entry name" value="CPSase_L_chain_A"/>
    <property type="match status" value="1"/>
</dbReference>
<dbReference type="HAMAP" id="MF_01210_B">
    <property type="entry name" value="CPSase_L_chain_B"/>
    <property type="match status" value="1"/>
</dbReference>
<dbReference type="InterPro" id="IPR011761">
    <property type="entry name" value="ATP-grasp"/>
</dbReference>
<dbReference type="InterPro" id="IPR013815">
    <property type="entry name" value="ATP_grasp_subdomain_1"/>
</dbReference>
<dbReference type="InterPro" id="IPR006275">
    <property type="entry name" value="CarbamoylP_synth_lsu"/>
</dbReference>
<dbReference type="InterPro" id="IPR005480">
    <property type="entry name" value="CarbamoylP_synth_lsu_oligo"/>
</dbReference>
<dbReference type="InterPro" id="IPR036897">
    <property type="entry name" value="CarbamoylP_synth_lsu_oligo_sf"/>
</dbReference>
<dbReference type="InterPro" id="IPR005479">
    <property type="entry name" value="CbamoylP_synth_lsu-like_ATP-bd"/>
</dbReference>
<dbReference type="InterPro" id="IPR005483">
    <property type="entry name" value="CbamoylP_synth_lsu_CPSase_dom"/>
</dbReference>
<dbReference type="InterPro" id="IPR011607">
    <property type="entry name" value="MGS-like_dom"/>
</dbReference>
<dbReference type="InterPro" id="IPR036914">
    <property type="entry name" value="MGS-like_dom_sf"/>
</dbReference>
<dbReference type="InterPro" id="IPR033937">
    <property type="entry name" value="MGS_CPS_CarB"/>
</dbReference>
<dbReference type="InterPro" id="IPR016185">
    <property type="entry name" value="PreATP-grasp_dom_sf"/>
</dbReference>
<dbReference type="NCBIfam" id="TIGR01369">
    <property type="entry name" value="CPSaseII_lrg"/>
    <property type="match status" value="1"/>
</dbReference>
<dbReference type="NCBIfam" id="NF003671">
    <property type="entry name" value="PRK05294.1"/>
    <property type="match status" value="1"/>
</dbReference>
<dbReference type="NCBIfam" id="NF009455">
    <property type="entry name" value="PRK12815.1"/>
    <property type="match status" value="1"/>
</dbReference>
<dbReference type="PANTHER" id="PTHR11405:SF53">
    <property type="entry name" value="CARBAMOYL-PHOSPHATE SYNTHASE [AMMONIA], MITOCHONDRIAL"/>
    <property type="match status" value="1"/>
</dbReference>
<dbReference type="PANTHER" id="PTHR11405">
    <property type="entry name" value="CARBAMOYLTRANSFERASE FAMILY MEMBER"/>
    <property type="match status" value="1"/>
</dbReference>
<dbReference type="Pfam" id="PF02786">
    <property type="entry name" value="CPSase_L_D2"/>
    <property type="match status" value="2"/>
</dbReference>
<dbReference type="Pfam" id="PF02787">
    <property type="entry name" value="CPSase_L_D3"/>
    <property type="match status" value="1"/>
</dbReference>
<dbReference type="Pfam" id="PF02142">
    <property type="entry name" value="MGS"/>
    <property type="match status" value="1"/>
</dbReference>
<dbReference type="PRINTS" id="PR00098">
    <property type="entry name" value="CPSASE"/>
</dbReference>
<dbReference type="SMART" id="SM01096">
    <property type="entry name" value="CPSase_L_D3"/>
    <property type="match status" value="1"/>
</dbReference>
<dbReference type="SMART" id="SM00851">
    <property type="entry name" value="MGS"/>
    <property type="match status" value="1"/>
</dbReference>
<dbReference type="SUPFAM" id="SSF48108">
    <property type="entry name" value="Carbamoyl phosphate synthetase, large subunit connection domain"/>
    <property type="match status" value="1"/>
</dbReference>
<dbReference type="SUPFAM" id="SSF56059">
    <property type="entry name" value="Glutathione synthetase ATP-binding domain-like"/>
    <property type="match status" value="2"/>
</dbReference>
<dbReference type="SUPFAM" id="SSF52335">
    <property type="entry name" value="Methylglyoxal synthase-like"/>
    <property type="match status" value="1"/>
</dbReference>
<dbReference type="SUPFAM" id="SSF52440">
    <property type="entry name" value="PreATP-grasp domain"/>
    <property type="match status" value="2"/>
</dbReference>
<dbReference type="PROSITE" id="PS50975">
    <property type="entry name" value="ATP_GRASP"/>
    <property type="match status" value="2"/>
</dbReference>
<dbReference type="PROSITE" id="PS00866">
    <property type="entry name" value="CPSASE_1"/>
    <property type="match status" value="2"/>
</dbReference>
<dbReference type="PROSITE" id="PS00867">
    <property type="entry name" value="CPSASE_2"/>
    <property type="match status" value="2"/>
</dbReference>
<dbReference type="PROSITE" id="PS51855">
    <property type="entry name" value="MGS"/>
    <property type="match status" value="1"/>
</dbReference>
<organism>
    <name type="scientific">Clostridium beijerinckii (strain ATCC 51743 / NCIMB 8052)</name>
    <name type="common">Clostridium acetobutylicum</name>
    <dbReference type="NCBI Taxonomy" id="290402"/>
    <lineage>
        <taxon>Bacteria</taxon>
        <taxon>Bacillati</taxon>
        <taxon>Bacillota</taxon>
        <taxon>Clostridia</taxon>
        <taxon>Eubacteriales</taxon>
        <taxon>Clostridiaceae</taxon>
        <taxon>Clostridium</taxon>
    </lineage>
</organism>
<proteinExistence type="inferred from homology"/>